<protein>
    <recommendedName>
        <fullName>Outer membrane protein P2</fullName>
        <shortName>OMP P2</shortName>
    </recommendedName>
</protein>
<sequence>MKKTLAALIVGAFAASAANAAVVYNNEGTNVELGGRLSIIAEQSNSTIKDQKQQHGALRNQSSRFHIKATHNFGDGFYAQGYLETRLVSAQSGTESDNFGHIITKYAYVTLGNKAFGEVKLGRAKTIADGITSAEDKEYGVLNNSKYIPTNGNTVGYTFKGIDGLVLGANYLLAQERNKYGTGVGEVTSQSISNGVQVGAKYDANNIIVGIAYGRTNYREDVSQQDDAGKKQQVNGALSTLGYRFSDLGLLVSLDSGYAKTKNYKDKHEKRYFVSPGFQYELMEDTNLYGNFKYERNSVDQGKKEREHAVLFGVDHKLHKQVLTYIEGAYARTRTTTRDTTKNTSTVKTEKEKSVGVGLRVYF</sequence>
<organism>
    <name type="scientific">Haemophilus influenzae</name>
    <dbReference type="NCBI Taxonomy" id="727"/>
    <lineage>
        <taxon>Bacteria</taxon>
        <taxon>Pseudomonadati</taxon>
        <taxon>Pseudomonadota</taxon>
        <taxon>Gammaproteobacteria</taxon>
        <taxon>Pasteurellales</taxon>
        <taxon>Pasteurellaceae</taxon>
        <taxon>Haemophilus</taxon>
    </lineage>
</organism>
<proteinExistence type="inferred from homology"/>
<keyword id="KW-0998">Cell outer membrane</keyword>
<keyword id="KW-0406">Ion transport</keyword>
<keyword id="KW-0472">Membrane</keyword>
<keyword id="KW-0626">Porin</keyword>
<keyword id="KW-0732">Signal</keyword>
<keyword id="KW-0812">Transmembrane</keyword>
<keyword id="KW-1134">Transmembrane beta strand</keyword>
<keyword id="KW-0813">Transport</keyword>
<evidence type="ECO:0000250" key="1"/>
<evidence type="ECO:0000305" key="2"/>
<dbReference type="EMBL" id="X73391">
    <property type="protein sequence ID" value="CAA51808.1"/>
    <property type="molecule type" value="Genomic_DNA"/>
</dbReference>
<dbReference type="SMR" id="Q48220"/>
<dbReference type="GO" id="GO:0009279">
    <property type="term" value="C:cell outer membrane"/>
    <property type="evidence" value="ECO:0007669"/>
    <property type="project" value="UniProtKB-SubCell"/>
</dbReference>
<dbReference type="GO" id="GO:0046930">
    <property type="term" value="C:pore complex"/>
    <property type="evidence" value="ECO:0007669"/>
    <property type="project" value="UniProtKB-KW"/>
</dbReference>
<dbReference type="GO" id="GO:0015288">
    <property type="term" value="F:porin activity"/>
    <property type="evidence" value="ECO:0007669"/>
    <property type="project" value="UniProtKB-KW"/>
</dbReference>
<dbReference type="GO" id="GO:0006811">
    <property type="term" value="P:monoatomic ion transport"/>
    <property type="evidence" value="ECO:0007669"/>
    <property type="project" value="UniProtKB-KW"/>
</dbReference>
<dbReference type="CDD" id="cd00342">
    <property type="entry name" value="gram_neg_porins"/>
    <property type="match status" value="1"/>
</dbReference>
<dbReference type="Gene3D" id="2.40.160.10">
    <property type="entry name" value="Porin"/>
    <property type="match status" value="1"/>
</dbReference>
<dbReference type="InterPro" id="IPR050298">
    <property type="entry name" value="Gram-neg_bact_OMP"/>
</dbReference>
<dbReference type="InterPro" id="IPR033900">
    <property type="entry name" value="Gram_neg_porin_domain"/>
</dbReference>
<dbReference type="InterPro" id="IPR023614">
    <property type="entry name" value="Porin_dom_sf"/>
</dbReference>
<dbReference type="PANTHER" id="PTHR34501:SF2">
    <property type="entry name" value="OUTER MEMBRANE PORIN F-RELATED"/>
    <property type="match status" value="1"/>
</dbReference>
<dbReference type="PANTHER" id="PTHR34501">
    <property type="entry name" value="PROTEIN YDDL-RELATED"/>
    <property type="match status" value="1"/>
</dbReference>
<dbReference type="Pfam" id="PF13609">
    <property type="entry name" value="Porin_4"/>
    <property type="match status" value="1"/>
</dbReference>
<dbReference type="SUPFAM" id="SSF56935">
    <property type="entry name" value="Porins"/>
    <property type="match status" value="1"/>
</dbReference>
<accession>Q48220</accession>
<gene>
    <name type="primary">ompP2</name>
</gene>
<comment type="function">
    <text evidence="1">Forms pores that allow passive diffusion of small molecules across the outer membrane.</text>
</comment>
<comment type="subunit">
    <text evidence="1">Homotrimer.</text>
</comment>
<comment type="subcellular location">
    <subcellularLocation>
        <location>Cell outer membrane</location>
        <topology>Multi-pass membrane protein</topology>
    </subcellularLocation>
</comment>
<comment type="similarity">
    <text evidence="2">Belongs to the Gram-negative porin family.</text>
</comment>
<reference key="1">
    <citation type="journal article" date="1993" name="Microb. Pathog.">
        <title>Genetic analysis of the diversity in outer membrane protein P2 of non-encapsulated Haemophilus influenzae.</title>
        <authorList>
            <person name="Duim B."/>
            <person name="Dankert J."/>
            <person name="Jansen H.M."/>
            <person name="van Alphen L."/>
        </authorList>
    </citation>
    <scope>NUCLEOTIDE SEQUENCE [GENOMIC DNA]</scope>
    <source>
        <strain>3230B</strain>
    </source>
</reference>
<name>OPP2B_HAEIF</name>
<feature type="signal peptide">
    <location>
        <begin position="1"/>
        <end position="20"/>
    </location>
</feature>
<feature type="chain" id="PRO_0000025268" description="Outer membrane protein P2">
    <location>
        <begin position="21"/>
        <end position="363"/>
    </location>
</feature>